<gene>
    <name evidence="1" type="primary">nudC</name>
    <name type="ordered locus">ECED1_4703</name>
</gene>
<proteinExistence type="inferred from homology"/>
<dbReference type="EC" id="3.6.1.-" evidence="1"/>
<dbReference type="EC" id="3.6.1.22" evidence="1"/>
<dbReference type="EMBL" id="CU928162">
    <property type="protein sequence ID" value="CAR10667.1"/>
    <property type="molecule type" value="Genomic_DNA"/>
</dbReference>
<dbReference type="RefSeq" id="WP_000373936.1">
    <property type="nucleotide sequence ID" value="NC_011745.1"/>
</dbReference>
<dbReference type="SMR" id="B7N2J8"/>
<dbReference type="KEGG" id="ecq:ECED1_4703"/>
<dbReference type="HOGENOM" id="CLU_037162_0_1_6"/>
<dbReference type="Proteomes" id="UP000000748">
    <property type="component" value="Chromosome"/>
</dbReference>
<dbReference type="GO" id="GO:0005829">
    <property type="term" value="C:cytosol"/>
    <property type="evidence" value="ECO:0007669"/>
    <property type="project" value="TreeGrafter"/>
</dbReference>
<dbReference type="GO" id="GO:0000287">
    <property type="term" value="F:magnesium ion binding"/>
    <property type="evidence" value="ECO:0007669"/>
    <property type="project" value="UniProtKB-UniRule"/>
</dbReference>
<dbReference type="GO" id="GO:0030145">
    <property type="term" value="F:manganese ion binding"/>
    <property type="evidence" value="ECO:0007669"/>
    <property type="project" value="UniProtKB-UniRule"/>
</dbReference>
<dbReference type="GO" id="GO:0000210">
    <property type="term" value="F:NAD+ diphosphatase activity"/>
    <property type="evidence" value="ECO:0007669"/>
    <property type="project" value="UniProtKB-UniRule"/>
</dbReference>
<dbReference type="GO" id="GO:0035529">
    <property type="term" value="F:NADH pyrophosphatase activity"/>
    <property type="evidence" value="ECO:0007669"/>
    <property type="project" value="TreeGrafter"/>
</dbReference>
<dbReference type="GO" id="GO:0110153">
    <property type="term" value="F:RNA NAD-cap (NMN-forming) hydrolase activity"/>
    <property type="evidence" value="ECO:0007669"/>
    <property type="project" value="RHEA"/>
</dbReference>
<dbReference type="GO" id="GO:0008270">
    <property type="term" value="F:zinc ion binding"/>
    <property type="evidence" value="ECO:0007669"/>
    <property type="project" value="UniProtKB-UniRule"/>
</dbReference>
<dbReference type="GO" id="GO:0019677">
    <property type="term" value="P:NAD catabolic process"/>
    <property type="evidence" value="ECO:0007669"/>
    <property type="project" value="TreeGrafter"/>
</dbReference>
<dbReference type="GO" id="GO:0006734">
    <property type="term" value="P:NADH metabolic process"/>
    <property type="evidence" value="ECO:0007669"/>
    <property type="project" value="TreeGrafter"/>
</dbReference>
<dbReference type="GO" id="GO:0006742">
    <property type="term" value="P:NADP catabolic process"/>
    <property type="evidence" value="ECO:0007669"/>
    <property type="project" value="TreeGrafter"/>
</dbReference>
<dbReference type="CDD" id="cd03429">
    <property type="entry name" value="NUDIX_NADH_pyrophosphatase_Nudt13"/>
    <property type="match status" value="1"/>
</dbReference>
<dbReference type="FunFam" id="3.90.79.10:FF:000004">
    <property type="entry name" value="NADH pyrophosphatase"/>
    <property type="match status" value="1"/>
</dbReference>
<dbReference type="FunFam" id="3.90.79.20:FF:000001">
    <property type="entry name" value="NADH pyrophosphatase"/>
    <property type="match status" value="1"/>
</dbReference>
<dbReference type="Gene3D" id="3.90.79.20">
    <property type="match status" value="1"/>
</dbReference>
<dbReference type="Gene3D" id="3.90.79.10">
    <property type="entry name" value="Nucleoside Triphosphate Pyrophosphohydrolase"/>
    <property type="match status" value="1"/>
</dbReference>
<dbReference type="HAMAP" id="MF_00297">
    <property type="entry name" value="Nudix_NudC"/>
    <property type="match status" value="1"/>
</dbReference>
<dbReference type="InterPro" id="IPR050241">
    <property type="entry name" value="NAD-cap_RNA_hydrolase_NudC"/>
</dbReference>
<dbReference type="InterPro" id="IPR049734">
    <property type="entry name" value="NudC-like_C"/>
</dbReference>
<dbReference type="InterPro" id="IPR015797">
    <property type="entry name" value="NUDIX_hydrolase-like_dom_sf"/>
</dbReference>
<dbReference type="InterPro" id="IPR020084">
    <property type="entry name" value="NUDIX_hydrolase_CS"/>
</dbReference>
<dbReference type="InterPro" id="IPR000086">
    <property type="entry name" value="NUDIX_hydrolase_dom"/>
</dbReference>
<dbReference type="InterPro" id="IPR022925">
    <property type="entry name" value="RNA_Hydrolase_NudC"/>
</dbReference>
<dbReference type="InterPro" id="IPR015376">
    <property type="entry name" value="Znr_NADH_PPase"/>
</dbReference>
<dbReference type="NCBIfam" id="NF001299">
    <property type="entry name" value="PRK00241.1"/>
    <property type="match status" value="1"/>
</dbReference>
<dbReference type="PANTHER" id="PTHR42904:SF6">
    <property type="entry name" value="NAD-CAPPED RNA HYDROLASE NUDT12"/>
    <property type="match status" value="1"/>
</dbReference>
<dbReference type="PANTHER" id="PTHR42904">
    <property type="entry name" value="NUDIX HYDROLASE, NUDC SUBFAMILY"/>
    <property type="match status" value="1"/>
</dbReference>
<dbReference type="Pfam" id="PF00293">
    <property type="entry name" value="NUDIX"/>
    <property type="match status" value="1"/>
</dbReference>
<dbReference type="Pfam" id="PF09297">
    <property type="entry name" value="Zn_ribbon_NUD"/>
    <property type="match status" value="1"/>
</dbReference>
<dbReference type="SUPFAM" id="SSF55811">
    <property type="entry name" value="Nudix"/>
    <property type="match status" value="2"/>
</dbReference>
<dbReference type="PROSITE" id="PS51462">
    <property type="entry name" value="NUDIX"/>
    <property type="match status" value="1"/>
</dbReference>
<dbReference type="PROSITE" id="PS00893">
    <property type="entry name" value="NUDIX_BOX"/>
    <property type="match status" value="1"/>
</dbReference>
<organism>
    <name type="scientific">Escherichia coli O81 (strain ED1a)</name>
    <dbReference type="NCBI Taxonomy" id="585397"/>
    <lineage>
        <taxon>Bacteria</taxon>
        <taxon>Pseudomonadati</taxon>
        <taxon>Pseudomonadota</taxon>
        <taxon>Gammaproteobacteria</taxon>
        <taxon>Enterobacterales</taxon>
        <taxon>Enterobacteriaceae</taxon>
        <taxon>Escherichia</taxon>
    </lineage>
</organism>
<name>NUDC_ECO81</name>
<keyword id="KW-0378">Hydrolase</keyword>
<keyword id="KW-0460">Magnesium</keyword>
<keyword id="KW-0464">Manganese</keyword>
<keyword id="KW-0479">Metal-binding</keyword>
<keyword id="KW-0520">NAD</keyword>
<keyword id="KW-0862">Zinc</keyword>
<comment type="function">
    <text evidence="1">mRNA decapping enzyme that specifically removes the nicotinamide adenine dinucleotide (NAD) cap from a subset of mRNAs by hydrolyzing the diphosphate linkage to produce nicotinamide mononucleotide (NMN) and 5' monophosphate mRNA. The NAD-cap is present at the 5'-end of some mRNAs and stabilizes RNA against 5'-processing. Has preference for mRNAs with a 5'-end purine. Catalyzes the hydrolysis of a broad range of dinucleotide pyrophosphates.</text>
</comment>
<comment type="catalytic activity">
    <reaction evidence="1">
        <text>a 5'-end NAD(+)-phospho-ribonucleoside in mRNA + H2O = a 5'-end phospho-adenosine-phospho-ribonucleoside in mRNA + beta-nicotinamide D-ribonucleotide + 2 H(+)</text>
        <dbReference type="Rhea" id="RHEA:60876"/>
        <dbReference type="Rhea" id="RHEA-COMP:15698"/>
        <dbReference type="Rhea" id="RHEA-COMP:15719"/>
        <dbReference type="ChEBI" id="CHEBI:14649"/>
        <dbReference type="ChEBI" id="CHEBI:15377"/>
        <dbReference type="ChEBI" id="CHEBI:15378"/>
        <dbReference type="ChEBI" id="CHEBI:144029"/>
        <dbReference type="ChEBI" id="CHEBI:144051"/>
    </reaction>
    <physiologicalReaction direction="left-to-right" evidence="1">
        <dbReference type="Rhea" id="RHEA:60877"/>
    </physiologicalReaction>
</comment>
<comment type="catalytic activity">
    <reaction evidence="1">
        <text>NAD(+) + H2O = beta-nicotinamide D-ribonucleotide + AMP + 2 H(+)</text>
        <dbReference type="Rhea" id="RHEA:11800"/>
        <dbReference type="ChEBI" id="CHEBI:14649"/>
        <dbReference type="ChEBI" id="CHEBI:15377"/>
        <dbReference type="ChEBI" id="CHEBI:15378"/>
        <dbReference type="ChEBI" id="CHEBI:57540"/>
        <dbReference type="ChEBI" id="CHEBI:456215"/>
        <dbReference type="EC" id="3.6.1.22"/>
    </reaction>
</comment>
<comment type="catalytic activity">
    <reaction evidence="1">
        <text>NADH + H2O = reduced beta-nicotinamide D-ribonucleotide + AMP + 2 H(+)</text>
        <dbReference type="Rhea" id="RHEA:48868"/>
        <dbReference type="ChEBI" id="CHEBI:15377"/>
        <dbReference type="ChEBI" id="CHEBI:15378"/>
        <dbReference type="ChEBI" id="CHEBI:57945"/>
        <dbReference type="ChEBI" id="CHEBI:90832"/>
        <dbReference type="ChEBI" id="CHEBI:456215"/>
        <dbReference type="EC" id="3.6.1.22"/>
    </reaction>
</comment>
<comment type="cofactor">
    <cofactor evidence="1">
        <name>Mg(2+)</name>
        <dbReference type="ChEBI" id="CHEBI:18420"/>
    </cofactor>
    <cofactor evidence="1">
        <name>Mn(2+)</name>
        <dbReference type="ChEBI" id="CHEBI:29035"/>
    </cofactor>
    <text evidence="1">Divalent metal cations. Mg(2+) or Mn(2+).</text>
</comment>
<comment type="cofactor">
    <cofactor evidence="1">
        <name>Zn(2+)</name>
        <dbReference type="ChEBI" id="CHEBI:29105"/>
    </cofactor>
    <text evidence="1">Binds 1 zinc ion per subunit.</text>
</comment>
<comment type="subunit">
    <text evidence="1">Homodimer.</text>
</comment>
<comment type="similarity">
    <text evidence="1">Belongs to the Nudix hydrolase family. NudC subfamily.</text>
</comment>
<accession>B7N2J8</accession>
<reference key="1">
    <citation type="journal article" date="2009" name="PLoS Genet.">
        <title>Organised genome dynamics in the Escherichia coli species results in highly diverse adaptive paths.</title>
        <authorList>
            <person name="Touchon M."/>
            <person name="Hoede C."/>
            <person name="Tenaillon O."/>
            <person name="Barbe V."/>
            <person name="Baeriswyl S."/>
            <person name="Bidet P."/>
            <person name="Bingen E."/>
            <person name="Bonacorsi S."/>
            <person name="Bouchier C."/>
            <person name="Bouvet O."/>
            <person name="Calteau A."/>
            <person name="Chiapello H."/>
            <person name="Clermont O."/>
            <person name="Cruveiller S."/>
            <person name="Danchin A."/>
            <person name="Diard M."/>
            <person name="Dossat C."/>
            <person name="Karoui M.E."/>
            <person name="Frapy E."/>
            <person name="Garry L."/>
            <person name="Ghigo J.M."/>
            <person name="Gilles A.M."/>
            <person name="Johnson J."/>
            <person name="Le Bouguenec C."/>
            <person name="Lescat M."/>
            <person name="Mangenot S."/>
            <person name="Martinez-Jehanne V."/>
            <person name="Matic I."/>
            <person name="Nassif X."/>
            <person name="Oztas S."/>
            <person name="Petit M.A."/>
            <person name="Pichon C."/>
            <person name="Rouy Z."/>
            <person name="Ruf C.S."/>
            <person name="Schneider D."/>
            <person name="Tourret J."/>
            <person name="Vacherie B."/>
            <person name="Vallenet D."/>
            <person name="Medigue C."/>
            <person name="Rocha E.P.C."/>
            <person name="Denamur E."/>
        </authorList>
    </citation>
    <scope>NUCLEOTIDE SEQUENCE [LARGE SCALE GENOMIC DNA]</scope>
    <source>
        <strain>ED1a</strain>
    </source>
</reference>
<feature type="chain" id="PRO_1000191834" description="NAD-capped RNA hydrolase NudC">
    <location>
        <begin position="1"/>
        <end position="257"/>
    </location>
</feature>
<feature type="domain" description="Nudix hydrolase" evidence="1">
    <location>
        <begin position="125"/>
        <end position="248"/>
    </location>
</feature>
<feature type="short sequence motif" description="Nudix box" evidence="1">
    <location>
        <begin position="159"/>
        <end position="180"/>
    </location>
</feature>
<feature type="binding site" evidence="1">
    <location>
        <position position="25"/>
    </location>
    <ligand>
        <name>substrate</name>
    </ligand>
</feature>
<feature type="binding site" evidence="1">
    <location>
        <position position="69"/>
    </location>
    <ligand>
        <name>substrate</name>
    </ligand>
</feature>
<feature type="binding site" evidence="1">
    <location>
        <position position="98"/>
    </location>
    <ligand>
        <name>Zn(2+)</name>
        <dbReference type="ChEBI" id="CHEBI:29105"/>
    </ligand>
</feature>
<feature type="binding site" evidence="1">
    <location>
        <position position="101"/>
    </location>
    <ligand>
        <name>Zn(2+)</name>
        <dbReference type="ChEBI" id="CHEBI:29105"/>
    </ligand>
</feature>
<feature type="binding site" evidence="1">
    <location>
        <position position="111"/>
    </location>
    <ligand>
        <name>substrate</name>
    </ligand>
</feature>
<feature type="binding site" evidence="1">
    <location>
        <position position="116"/>
    </location>
    <ligand>
        <name>Zn(2+)</name>
        <dbReference type="ChEBI" id="CHEBI:29105"/>
    </ligand>
</feature>
<feature type="binding site" evidence="1">
    <location>
        <position position="119"/>
    </location>
    <ligand>
        <name>Zn(2+)</name>
        <dbReference type="ChEBI" id="CHEBI:29105"/>
    </ligand>
</feature>
<feature type="binding site" evidence="1">
    <location>
        <position position="124"/>
    </location>
    <ligand>
        <name>substrate</name>
    </ligand>
</feature>
<feature type="binding site" evidence="1">
    <location>
        <position position="158"/>
    </location>
    <ligand>
        <name>a divalent metal cation</name>
        <dbReference type="ChEBI" id="CHEBI:60240"/>
        <label>1</label>
    </ligand>
</feature>
<feature type="binding site" evidence="1">
    <location>
        <position position="174"/>
    </location>
    <ligand>
        <name>a divalent metal cation</name>
        <dbReference type="ChEBI" id="CHEBI:60240"/>
        <label>2</label>
    </ligand>
</feature>
<feature type="binding site" evidence="1">
    <location>
        <position position="174"/>
    </location>
    <ligand>
        <name>a divalent metal cation</name>
        <dbReference type="ChEBI" id="CHEBI:60240"/>
        <label>3</label>
    </ligand>
</feature>
<feature type="binding site" evidence="1">
    <location>
        <position position="178"/>
    </location>
    <ligand>
        <name>a divalent metal cation</name>
        <dbReference type="ChEBI" id="CHEBI:60240"/>
        <label>1</label>
    </ligand>
</feature>
<feature type="binding site" evidence="1">
    <location>
        <position position="178"/>
    </location>
    <ligand>
        <name>a divalent metal cation</name>
        <dbReference type="ChEBI" id="CHEBI:60240"/>
        <label>3</label>
    </ligand>
</feature>
<feature type="binding site" evidence="1">
    <location>
        <begin position="192"/>
        <end position="199"/>
    </location>
    <ligand>
        <name>substrate</name>
    </ligand>
</feature>
<feature type="binding site" evidence="1">
    <location>
        <position position="219"/>
    </location>
    <ligand>
        <name>a divalent metal cation</name>
        <dbReference type="ChEBI" id="CHEBI:60240"/>
        <label>1</label>
    </ligand>
</feature>
<feature type="binding site" evidence="1">
    <location>
        <position position="219"/>
    </location>
    <ligand>
        <name>a divalent metal cation</name>
        <dbReference type="ChEBI" id="CHEBI:60240"/>
        <label>3</label>
    </ligand>
</feature>
<feature type="binding site" evidence="1">
    <location>
        <position position="241"/>
    </location>
    <ligand>
        <name>substrate</name>
    </ligand>
</feature>
<sequence length="257" mass="29688">MDRIIEKLDHGWWVVSHEQKLWLPKGELPYGEAANFDLVGQRALQIGEWQGEPVWLVQLQRRHDMGSVRQVIDLDVGLFQLAGRGVQLAEFYRSHKYCGYCGHEMYPSKTEWAMLCSHCRERYYPQIAPCIIVAIRRDDSILLAQHTRHRNGVHTVLAGFVEVGETLEQAVAREVMEESGIKVKNLRYVTSQPWPFPQSLMTAFMAEYDSGEIVIDPKELLEANWYRYDDLPLLPPPGTVARRLIEDTVAMCRAEYE</sequence>
<evidence type="ECO:0000255" key="1">
    <source>
        <dbReference type="HAMAP-Rule" id="MF_00297"/>
    </source>
</evidence>
<protein>
    <recommendedName>
        <fullName evidence="1">NAD-capped RNA hydrolase NudC</fullName>
        <shortName evidence="1">DeNADding enzyme NudC</shortName>
        <ecNumber evidence="1">3.6.1.-</ecNumber>
    </recommendedName>
    <alternativeName>
        <fullName evidence="1">NADH pyrophosphatase</fullName>
        <ecNumber evidence="1">3.6.1.22</ecNumber>
    </alternativeName>
</protein>